<dbReference type="EMBL" id="AP008981">
    <property type="protein sequence ID" value="BAG41255.1"/>
    <property type="molecule type" value="Genomic_DNA"/>
</dbReference>
<dbReference type="RefSeq" id="WP_012462213.1">
    <property type="nucleotide sequence ID" value="NC_010793.1"/>
</dbReference>
<dbReference type="SMR" id="B3CV58"/>
<dbReference type="KEGG" id="ott:OTT_1797"/>
<dbReference type="HOGENOM" id="CLU_062853_0_0_5"/>
<dbReference type="OrthoDB" id="9803740at2"/>
<dbReference type="Proteomes" id="UP000001033">
    <property type="component" value="Chromosome"/>
</dbReference>
<dbReference type="GO" id="GO:0015934">
    <property type="term" value="C:large ribosomal subunit"/>
    <property type="evidence" value="ECO:0007669"/>
    <property type="project" value="InterPro"/>
</dbReference>
<dbReference type="GO" id="GO:0019843">
    <property type="term" value="F:rRNA binding"/>
    <property type="evidence" value="ECO:0007669"/>
    <property type="project" value="UniProtKB-UniRule"/>
</dbReference>
<dbReference type="GO" id="GO:0003735">
    <property type="term" value="F:structural constituent of ribosome"/>
    <property type="evidence" value="ECO:0007669"/>
    <property type="project" value="InterPro"/>
</dbReference>
<dbReference type="GO" id="GO:0000049">
    <property type="term" value="F:tRNA binding"/>
    <property type="evidence" value="ECO:0007669"/>
    <property type="project" value="UniProtKB-KW"/>
</dbReference>
<dbReference type="GO" id="GO:0006417">
    <property type="term" value="P:regulation of translation"/>
    <property type="evidence" value="ECO:0007669"/>
    <property type="project" value="UniProtKB-KW"/>
</dbReference>
<dbReference type="GO" id="GO:0006412">
    <property type="term" value="P:translation"/>
    <property type="evidence" value="ECO:0007669"/>
    <property type="project" value="UniProtKB-UniRule"/>
</dbReference>
<dbReference type="CDD" id="cd00403">
    <property type="entry name" value="Ribosomal_L1"/>
    <property type="match status" value="1"/>
</dbReference>
<dbReference type="FunFam" id="3.40.50.790:FF:000001">
    <property type="entry name" value="50S ribosomal protein L1"/>
    <property type="match status" value="1"/>
</dbReference>
<dbReference type="Gene3D" id="3.30.190.20">
    <property type="match status" value="1"/>
</dbReference>
<dbReference type="Gene3D" id="3.40.50.790">
    <property type="match status" value="1"/>
</dbReference>
<dbReference type="HAMAP" id="MF_01318_B">
    <property type="entry name" value="Ribosomal_uL1_B"/>
    <property type="match status" value="1"/>
</dbReference>
<dbReference type="InterPro" id="IPR005878">
    <property type="entry name" value="Ribosom_uL1_bac-type"/>
</dbReference>
<dbReference type="InterPro" id="IPR002143">
    <property type="entry name" value="Ribosomal_uL1"/>
</dbReference>
<dbReference type="InterPro" id="IPR023674">
    <property type="entry name" value="Ribosomal_uL1-like"/>
</dbReference>
<dbReference type="InterPro" id="IPR028364">
    <property type="entry name" value="Ribosomal_uL1/biogenesis"/>
</dbReference>
<dbReference type="InterPro" id="IPR016095">
    <property type="entry name" value="Ribosomal_uL1_3-a/b-sand"/>
</dbReference>
<dbReference type="InterPro" id="IPR023673">
    <property type="entry name" value="Ribosomal_uL1_CS"/>
</dbReference>
<dbReference type="NCBIfam" id="TIGR01169">
    <property type="entry name" value="rplA_bact"/>
    <property type="match status" value="1"/>
</dbReference>
<dbReference type="PANTHER" id="PTHR36427">
    <property type="entry name" value="54S RIBOSOMAL PROTEIN L1, MITOCHONDRIAL"/>
    <property type="match status" value="1"/>
</dbReference>
<dbReference type="PANTHER" id="PTHR36427:SF3">
    <property type="entry name" value="LARGE RIBOSOMAL SUBUNIT PROTEIN UL1M"/>
    <property type="match status" value="1"/>
</dbReference>
<dbReference type="Pfam" id="PF00687">
    <property type="entry name" value="Ribosomal_L1"/>
    <property type="match status" value="1"/>
</dbReference>
<dbReference type="PIRSF" id="PIRSF002155">
    <property type="entry name" value="Ribosomal_L1"/>
    <property type="match status" value="1"/>
</dbReference>
<dbReference type="SUPFAM" id="SSF56808">
    <property type="entry name" value="Ribosomal protein L1"/>
    <property type="match status" value="1"/>
</dbReference>
<dbReference type="PROSITE" id="PS01199">
    <property type="entry name" value="RIBOSOMAL_L1"/>
    <property type="match status" value="1"/>
</dbReference>
<organism>
    <name type="scientific">Orientia tsutsugamushi (strain Ikeda)</name>
    <name type="common">Rickettsia tsutsugamushi</name>
    <dbReference type="NCBI Taxonomy" id="334380"/>
    <lineage>
        <taxon>Bacteria</taxon>
        <taxon>Pseudomonadati</taxon>
        <taxon>Pseudomonadota</taxon>
        <taxon>Alphaproteobacteria</taxon>
        <taxon>Rickettsiales</taxon>
        <taxon>Rickettsiaceae</taxon>
        <taxon>Rickettsieae</taxon>
        <taxon>Orientia</taxon>
    </lineage>
</organism>
<protein>
    <recommendedName>
        <fullName evidence="1">Large ribosomal subunit protein uL1</fullName>
    </recommendedName>
    <alternativeName>
        <fullName evidence="2">50S ribosomal protein L1</fullName>
    </alternativeName>
</protein>
<name>RL1_ORITI</name>
<gene>
    <name evidence="1" type="primary">rplA</name>
    <name type="ordered locus">OTT_1797</name>
</gene>
<proteinExistence type="inferred from homology"/>
<feature type="chain" id="PRO_1000141438" description="Large ribosomal subunit protein uL1">
    <location>
        <begin position="1"/>
        <end position="249"/>
    </location>
</feature>
<comment type="function">
    <text evidence="1">Binds directly to 23S rRNA. The L1 stalk is quite mobile in the ribosome, and is involved in E site tRNA release.</text>
</comment>
<comment type="function">
    <text evidence="1">Protein L1 is also a translational repressor protein, it controls the translation of the L11 operon by binding to its mRNA.</text>
</comment>
<comment type="subunit">
    <text evidence="1">Part of the 50S ribosomal subunit.</text>
</comment>
<comment type="similarity">
    <text evidence="1">Belongs to the universal ribosomal protein uL1 family.</text>
</comment>
<evidence type="ECO:0000255" key="1">
    <source>
        <dbReference type="HAMAP-Rule" id="MF_01318"/>
    </source>
</evidence>
<evidence type="ECO:0000305" key="2"/>
<accession>B3CV58</accession>
<keyword id="KW-0678">Repressor</keyword>
<keyword id="KW-0687">Ribonucleoprotein</keyword>
<keyword id="KW-0689">Ribosomal protein</keyword>
<keyword id="KW-0694">RNA-binding</keyword>
<keyword id="KW-0699">rRNA-binding</keyword>
<keyword id="KW-0810">Translation regulation</keyword>
<keyword id="KW-0820">tRNA-binding</keyword>
<reference key="1">
    <citation type="journal article" date="2008" name="DNA Res.">
        <title>The whole-genome sequencing of the obligate intracellular bacterium Orientia tsutsugamushi revealed massive gene amplification during reductive genome evolution.</title>
        <authorList>
            <person name="Nakayama K."/>
            <person name="Yamashita A."/>
            <person name="Kurokawa K."/>
            <person name="Morimoto T."/>
            <person name="Ogawa M."/>
            <person name="Fukuhara M."/>
            <person name="Urakami H."/>
            <person name="Ohnishi M."/>
            <person name="Uchiyama I."/>
            <person name="Ogura Y."/>
            <person name="Ooka T."/>
            <person name="Oshima K."/>
            <person name="Tamura A."/>
            <person name="Hattori M."/>
            <person name="Hayashi T."/>
        </authorList>
    </citation>
    <scope>NUCLEOTIDE SEQUENCE [LARGE SCALE GENOMIC DNA]</scope>
    <source>
        <strain>Ikeda</strain>
    </source>
</reference>
<sequence>MLNININKIAKDGYIYSKNIRLAKSKIDKQKCYDVREACSIIKEISFAKFNETVDIAIKLGVNPNHSNQVVRGVAAMPSGTGKTVKVAVICQEEKLDEFKTTGADIVGSLDIIEAIKSGNIDYDVYITTPAMMVAVSQVARILGPKGLMPNPKLGTVTNDVADVVKKVKSGQVEFKVDKAGNIHAGIGKISFSIDEIIANINAFVSAIIKSKPSEAKGAYLKGIYLSTTMGPSVRLDISSFTEISNERR</sequence>